<sequence length="752" mass="85240">MEVQKGLIEAFYNTYPLEKAKELDKSPLCSEYELFIKELWPSIVESFHNSTEFETAIRFCCYETARKSEIGLEERLKCLFAILDLLVIGNEINESFCDHLLPFLILEELMDIHTVNECAKLYEYFETRPSLMKGIVSNRGRGPVLLRISNELLRRLSRQENSSFCGRIDILLSKAFPPEERSGANLRGDYNTVHSFGKVELSPPSTPISDRTDLSYHKKLNTLFTAYWDLQCMCSNPPKLLASDTLPKFIDAAGSAIQAFESILQNTFFNGKSNPTIDPNSSSLLSEKYITLDKGFPSKYIYSRSLFEYQLSDEDFRLQAILQLIIIFDFLLDHSKERIERRTLEKWTNKAVIPIVILSDEDTSKLNELSKEAYSFLHTARCGSVQRTIKEIIHIEGNWKLWKGLGCPSLEKPLVDKAAIDEAVEGLKKLTNTPVKLRFAMGNAALSRLWEQAGENTLDDLKKEERYRIPSPESFLSGVKADKFEIEEAVRDDDKHFHEQSLATKTWRAFRSAINSHLQNFSDTGLGDVELLCNSIEGKPTTSKITPSIPPAFDIHIIEGEELLEEMKKRENVKHNSQNFASPMQTDAEGDIVQNEEEKESVEVEEGKHKNDLPKVSPKPPTEGVDSEVNGESLVQVNKVLKSEDDNTSEASKDPSSHVKSPENIEKLKQNDDHFEVTEEITSTINSKISEKQENNVAETILEVTSSPKSSENSQKQSEITKKRGRDEEDEPSDLHSSPKRPKTGEDGEIVL</sequence>
<evidence type="ECO:0000256" key="1">
    <source>
        <dbReference type="SAM" id="MobiDB-lite"/>
    </source>
</evidence>
<evidence type="ECO:0000269" key="2">
    <source>
    </source>
</evidence>
<dbReference type="EMBL" id="CU329672">
    <property type="protein sequence ID" value="CAB62828.1"/>
    <property type="molecule type" value="Genomic_DNA"/>
</dbReference>
<dbReference type="PIR" id="T50450">
    <property type="entry name" value="T50450"/>
</dbReference>
<dbReference type="BioGRID" id="275961">
    <property type="interactions" value="2"/>
</dbReference>
<dbReference type="FunCoup" id="Q9URT2">
    <property type="interactions" value="689"/>
</dbReference>
<dbReference type="STRING" id="284812.Q9URT2"/>
<dbReference type="iPTMnet" id="Q9URT2"/>
<dbReference type="PaxDb" id="4896-SPCP25A2.03.1"/>
<dbReference type="EnsemblFungi" id="SPCP25A2.03.1">
    <property type="protein sequence ID" value="SPCP25A2.03.1:pep"/>
    <property type="gene ID" value="SPCP25A2.03"/>
</dbReference>
<dbReference type="KEGG" id="spo:2539396"/>
<dbReference type="PomBase" id="SPCP25A2.03"/>
<dbReference type="VEuPathDB" id="FungiDB:SPCP25A2.03"/>
<dbReference type="eggNOG" id="KOG2491">
    <property type="taxonomic scope" value="Eukaryota"/>
</dbReference>
<dbReference type="HOGENOM" id="CLU_023700_0_0_1"/>
<dbReference type="InParanoid" id="Q9URT2"/>
<dbReference type="OMA" id="TTQGHIP"/>
<dbReference type="PhylomeDB" id="Q9URT2"/>
<dbReference type="PRO" id="PR:Q9URT2"/>
<dbReference type="Proteomes" id="UP000002485">
    <property type="component" value="Chromosome III"/>
</dbReference>
<dbReference type="GO" id="GO:0005634">
    <property type="term" value="C:nucleus"/>
    <property type="evidence" value="ECO:0007005"/>
    <property type="project" value="PomBase"/>
</dbReference>
<dbReference type="GO" id="GO:0000445">
    <property type="term" value="C:THO complex part of transcription export complex"/>
    <property type="evidence" value="ECO:0000266"/>
    <property type="project" value="PomBase"/>
</dbReference>
<dbReference type="GO" id="GO:0006406">
    <property type="term" value="P:mRNA export from nucleus"/>
    <property type="evidence" value="ECO:0000318"/>
    <property type="project" value="GO_Central"/>
</dbReference>
<dbReference type="GO" id="GO:0016973">
    <property type="term" value="P:poly(A)+ mRNA export from nucleus"/>
    <property type="evidence" value="ECO:0000305"/>
    <property type="project" value="PomBase"/>
</dbReference>
<dbReference type="InterPro" id="IPR021861">
    <property type="entry name" value="THO_THOC1"/>
</dbReference>
<dbReference type="PANTHER" id="PTHR13265:SF0">
    <property type="entry name" value="HPR1"/>
    <property type="match status" value="1"/>
</dbReference>
<dbReference type="PANTHER" id="PTHR13265">
    <property type="entry name" value="THO COMPLEX SUBUNIT 1"/>
    <property type="match status" value="1"/>
</dbReference>
<dbReference type="Pfam" id="PF11957">
    <property type="entry name" value="efThoc1"/>
    <property type="match status" value="1"/>
</dbReference>
<feature type="chain" id="PRO_0000116819" description="Uncharacterized protein P25A2.03">
    <location>
        <begin position="1"/>
        <end position="752"/>
    </location>
</feature>
<feature type="region of interest" description="Disordered" evidence="1">
    <location>
        <begin position="596"/>
        <end position="752"/>
    </location>
</feature>
<feature type="compositionally biased region" description="Basic and acidic residues" evidence="1">
    <location>
        <begin position="601"/>
        <end position="613"/>
    </location>
</feature>
<feature type="compositionally biased region" description="Basic and acidic residues" evidence="1">
    <location>
        <begin position="641"/>
        <end position="677"/>
    </location>
</feature>
<feature type="compositionally biased region" description="Polar residues" evidence="1">
    <location>
        <begin position="695"/>
        <end position="718"/>
    </location>
</feature>
<feature type="modified residue" description="Phosphoserine" evidence="2">
    <location>
        <position position="202"/>
    </location>
</feature>
<feature type="modified residue" description="Phosphoserine" evidence="2">
    <location>
        <position position="582"/>
    </location>
</feature>
<feature type="modified residue" description="Phosphoserine" evidence="2">
    <location>
        <position position="707"/>
    </location>
</feature>
<feature type="modified residue" description="Phosphoserine" evidence="2">
    <location>
        <position position="738"/>
    </location>
</feature>
<name>YJU3_SCHPO</name>
<keyword id="KW-0597">Phosphoprotein</keyword>
<keyword id="KW-1185">Reference proteome</keyword>
<proteinExistence type="evidence at protein level"/>
<gene>
    <name type="ORF">SPCP25A2.03</name>
</gene>
<reference key="1">
    <citation type="journal article" date="2002" name="Nature">
        <title>The genome sequence of Schizosaccharomyces pombe.</title>
        <authorList>
            <person name="Wood V."/>
            <person name="Gwilliam R."/>
            <person name="Rajandream M.A."/>
            <person name="Lyne M.H."/>
            <person name="Lyne R."/>
            <person name="Stewart A."/>
            <person name="Sgouros J.G."/>
            <person name="Peat N."/>
            <person name="Hayles J."/>
            <person name="Baker S.G."/>
            <person name="Basham D."/>
            <person name="Bowman S."/>
            <person name="Brooks K."/>
            <person name="Brown D."/>
            <person name="Brown S."/>
            <person name="Chillingworth T."/>
            <person name="Churcher C.M."/>
            <person name="Collins M."/>
            <person name="Connor R."/>
            <person name="Cronin A."/>
            <person name="Davis P."/>
            <person name="Feltwell T."/>
            <person name="Fraser A."/>
            <person name="Gentles S."/>
            <person name="Goble A."/>
            <person name="Hamlin N."/>
            <person name="Harris D.E."/>
            <person name="Hidalgo J."/>
            <person name="Hodgson G."/>
            <person name="Holroyd S."/>
            <person name="Hornsby T."/>
            <person name="Howarth S."/>
            <person name="Huckle E.J."/>
            <person name="Hunt S."/>
            <person name="Jagels K."/>
            <person name="James K.D."/>
            <person name="Jones L."/>
            <person name="Jones M."/>
            <person name="Leather S."/>
            <person name="McDonald S."/>
            <person name="McLean J."/>
            <person name="Mooney P."/>
            <person name="Moule S."/>
            <person name="Mungall K.L."/>
            <person name="Murphy L.D."/>
            <person name="Niblett D."/>
            <person name="Odell C."/>
            <person name="Oliver K."/>
            <person name="O'Neil S."/>
            <person name="Pearson D."/>
            <person name="Quail M.A."/>
            <person name="Rabbinowitsch E."/>
            <person name="Rutherford K.M."/>
            <person name="Rutter S."/>
            <person name="Saunders D."/>
            <person name="Seeger K."/>
            <person name="Sharp S."/>
            <person name="Skelton J."/>
            <person name="Simmonds M.N."/>
            <person name="Squares R."/>
            <person name="Squares S."/>
            <person name="Stevens K."/>
            <person name="Taylor K."/>
            <person name="Taylor R.G."/>
            <person name="Tivey A."/>
            <person name="Walsh S.V."/>
            <person name="Warren T."/>
            <person name="Whitehead S."/>
            <person name="Woodward J.R."/>
            <person name="Volckaert G."/>
            <person name="Aert R."/>
            <person name="Robben J."/>
            <person name="Grymonprez B."/>
            <person name="Weltjens I."/>
            <person name="Vanstreels E."/>
            <person name="Rieger M."/>
            <person name="Schaefer M."/>
            <person name="Mueller-Auer S."/>
            <person name="Gabel C."/>
            <person name="Fuchs M."/>
            <person name="Duesterhoeft A."/>
            <person name="Fritzc C."/>
            <person name="Holzer E."/>
            <person name="Moestl D."/>
            <person name="Hilbert H."/>
            <person name="Borzym K."/>
            <person name="Langer I."/>
            <person name="Beck A."/>
            <person name="Lehrach H."/>
            <person name="Reinhardt R."/>
            <person name="Pohl T.M."/>
            <person name="Eger P."/>
            <person name="Zimmermann W."/>
            <person name="Wedler H."/>
            <person name="Wambutt R."/>
            <person name="Purnelle B."/>
            <person name="Goffeau A."/>
            <person name="Cadieu E."/>
            <person name="Dreano S."/>
            <person name="Gloux S."/>
            <person name="Lelaure V."/>
            <person name="Mottier S."/>
            <person name="Galibert F."/>
            <person name="Aves S.J."/>
            <person name="Xiang Z."/>
            <person name="Hunt C."/>
            <person name="Moore K."/>
            <person name="Hurst S.M."/>
            <person name="Lucas M."/>
            <person name="Rochet M."/>
            <person name="Gaillardin C."/>
            <person name="Tallada V.A."/>
            <person name="Garzon A."/>
            <person name="Thode G."/>
            <person name="Daga R.R."/>
            <person name="Cruzado L."/>
            <person name="Jimenez J."/>
            <person name="Sanchez M."/>
            <person name="del Rey F."/>
            <person name="Benito J."/>
            <person name="Dominguez A."/>
            <person name="Revuelta J.L."/>
            <person name="Moreno S."/>
            <person name="Armstrong J."/>
            <person name="Forsburg S.L."/>
            <person name="Cerutti L."/>
            <person name="Lowe T."/>
            <person name="McCombie W.R."/>
            <person name="Paulsen I."/>
            <person name="Potashkin J."/>
            <person name="Shpakovski G.V."/>
            <person name="Ussery D."/>
            <person name="Barrell B.G."/>
            <person name="Nurse P."/>
        </authorList>
    </citation>
    <scope>NUCLEOTIDE SEQUENCE [LARGE SCALE GENOMIC DNA]</scope>
    <source>
        <strain>972 / ATCC 24843</strain>
    </source>
</reference>
<reference key="2">
    <citation type="journal article" date="2008" name="J. Proteome Res.">
        <title>Phosphoproteome analysis of fission yeast.</title>
        <authorList>
            <person name="Wilson-Grady J.T."/>
            <person name="Villen J."/>
            <person name="Gygi S.P."/>
        </authorList>
    </citation>
    <scope>PHOSPHORYLATION [LARGE SCALE ANALYSIS] AT SER-202; SER-582; SER-707 AND SER-738</scope>
    <scope>IDENTIFICATION BY MASS SPECTROMETRY</scope>
</reference>
<protein>
    <recommendedName>
        <fullName>Uncharacterized protein P25A2.03</fullName>
    </recommendedName>
</protein>
<organism>
    <name type="scientific">Schizosaccharomyces pombe (strain 972 / ATCC 24843)</name>
    <name type="common">Fission yeast</name>
    <dbReference type="NCBI Taxonomy" id="284812"/>
    <lineage>
        <taxon>Eukaryota</taxon>
        <taxon>Fungi</taxon>
        <taxon>Dikarya</taxon>
        <taxon>Ascomycota</taxon>
        <taxon>Taphrinomycotina</taxon>
        <taxon>Schizosaccharomycetes</taxon>
        <taxon>Schizosaccharomycetales</taxon>
        <taxon>Schizosaccharomycetaceae</taxon>
        <taxon>Schizosaccharomyces</taxon>
    </lineage>
</organism>
<accession>Q9URT2</accession>